<name>SPEE_XANOR</name>
<organism>
    <name type="scientific">Xanthomonas oryzae pv. oryzae (strain KACC10331 / KXO85)</name>
    <dbReference type="NCBI Taxonomy" id="291331"/>
    <lineage>
        <taxon>Bacteria</taxon>
        <taxon>Pseudomonadati</taxon>
        <taxon>Pseudomonadota</taxon>
        <taxon>Gammaproteobacteria</taxon>
        <taxon>Lysobacterales</taxon>
        <taxon>Lysobacteraceae</taxon>
        <taxon>Xanthomonas</taxon>
    </lineage>
</organism>
<comment type="function">
    <text evidence="1">Catalyzes the irreversible transfer of a propylamine group from the amino donor S-adenosylmethioninamine (decarboxy-AdoMet) to putrescine (1,4-diaminobutane) to yield spermidine.</text>
</comment>
<comment type="catalytic activity">
    <reaction evidence="1">
        <text>S-adenosyl 3-(methylsulfanyl)propylamine + putrescine = S-methyl-5'-thioadenosine + spermidine + H(+)</text>
        <dbReference type="Rhea" id="RHEA:12721"/>
        <dbReference type="ChEBI" id="CHEBI:15378"/>
        <dbReference type="ChEBI" id="CHEBI:17509"/>
        <dbReference type="ChEBI" id="CHEBI:57443"/>
        <dbReference type="ChEBI" id="CHEBI:57834"/>
        <dbReference type="ChEBI" id="CHEBI:326268"/>
        <dbReference type="EC" id="2.5.1.16"/>
    </reaction>
</comment>
<comment type="pathway">
    <text evidence="1">Amine and polyamine biosynthesis; spermidine biosynthesis; spermidine from putrescine: step 1/1.</text>
</comment>
<comment type="subunit">
    <text evidence="1">Homodimer or homotetramer.</text>
</comment>
<comment type="subcellular location">
    <subcellularLocation>
        <location evidence="1">Cytoplasm</location>
    </subcellularLocation>
</comment>
<comment type="similarity">
    <text evidence="1">Belongs to the spermidine/spermine synthase family.</text>
</comment>
<keyword id="KW-0963">Cytoplasm</keyword>
<keyword id="KW-0620">Polyamine biosynthesis</keyword>
<keyword id="KW-1185">Reference proteome</keyword>
<keyword id="KW-0745">Spermidine biosynthesis</keyword>
<keyword id="KW-0808">Transferase</keyword>
<accession>Q5H6E7</accession>
<sequence length="285" mass="31568">MSTNDNWYIEHFQPTGSAIGFRISGKLDEVQSLFQKIEIYQTTDWGKLMLIDGAVMLTSRDNFFYHEMISHPALFTHPTPKRVVIIGGGDCGTLREVLKHPGVESATQCDIDEQVTRMSEKYFPELCDSNHDARAELLFDDGVAYMANCPAGSVDIVIVDSTDPVGPAEGLFNKAFYESCFKALKDDGLLVQQSESPLALLDLIKEMRTEMGKAGFQSFKTLPFPQPCYPTGWWSVTMASKQAKADFAFRQGAAQAKGFETLYYTAHLHTGVLVAPPFVAKALGE</sequence>
<evidence type="ECO:0000255" key="1">
    <source>
        <dbReference type="HAMAP-Rule" id="MF_00198"/>
    </source>
</evidence>
<proteinExistence type="inferred from homology"/>
<dbReference type="EC" id="2.5.1.16" evidence="1"/>
<dbReference type="EMBL" id="AE013598">
    <property type="protein sequence ID" value="AAW73473.1"/>
    <property type="molecule type" value="Genomic_DNA"/>
</dbReference>
<dbReference type="SMR" id="Q5H6E7"/>
<dbReference type="STRING" id="291331.XOO0219"/>
<dbReference type="KEGG" id="xoo:XOO0219"/>
<dbReference type="HOGENOM" id="CLU_048199_0_0_6"/>
<dbReference type="UniPathway" id="UPA00248">
    <property type="reaction ID" value="UER00314"/>
</dbReference>
<dbReference type="Proteomes" id="UP000006735">
    <property type="component" value="Chromosome"/>
</dbReference>
<dbReference type="GO" id="GO:0005829">
    <property type="term" value="C:cytosol"/>
    <property type="evidence" value="ECO:0007669"/>
    <property type="project" value="TreeGrafter"/>
</dbReference>
<dbReference type="GO" id="GO:0004766">
    <property type="term" value="F:spermidine synthase activity"/>
    <property type="evidence" value="ECO:0007669"/>
    <property type="project" value="UniProtKB-UniRule"/>
</dbReference>
<dbReference type="GO" id="GO:0008295">
    <property type="term" value="P:spermidine biosynthetic process"/>
    <property type="evidence" value="ECO:0007669"/>
    <property type="project" value="UniProtKB-UniRule"/>
</dbReference>
<dbReference type="FunFam" id="3.40.50.150:FF:000290">
    <property type="entry name" value="Polyamine aminopropyltransferase"/>
    <property type="match status" value="1"/>
</dbReference>
<dbReference type="Gene3D" id="2.30.140.10">
    <property type="entry name" value="Spermidine synthase, tetramerisation domain"/>
    <property type="match status" value="1"/>
</dbReference>
<dbReference type="Gene3D" id="3.40.50.150">
    <property type="entry name" value="Vaccinia Virus protein VP39"/>
    <property type="match status" value="1"/>
</dbReference>
<dbReference type="HAMAP" id="MF_00198">
    <property type="entry name" value="Spermidine_synth"/>
    <property type="match status" value="1"/>
</dbReference>
<dbReference type="InterPro" id="IPR030374">
    <property type="entry name" value="PABS"/>
</dbReference>
<dbReference type="InterPro" id="IPR030373">
    <property type="entry name" value="PABS_CS"/>
</dbReference>
<dbReference type="InterPro" id="IPR029063">
    <property type="entry name" value="SAM-dependent_MTases_sf"/>
</dbReference>
<dbReference type="InterPro" id="IPR001045">
    <property type="entry name" value="Spermi_synthase"/>
</dbReference>
<dbReference type="InterPro" id="IPR035246">
    <property type="entry name" value="Spermidine_synt_N"/>
</dbReference>
<dbReference type="InterPro" id="IPR037163">
    <property type="entry name" value="Spermidine_synt_N_sf"/>
</dbReference>
<dbReference type="NCBIfam" id="NF002010">
    <property type="entry name" value="PRK00811.1"/>
    <property type="match status" value="1"/>
</dbReference>
<dbReference type="NCBIfam" id="TIGR00417">
    <property type="entry name" value="speE"/>
    <property type="match status" value="1"/>
</dbReference>
<dbReference type="PANTHER" id="PTHR11558:SF11">
    <property type="entry name" value="SPERMIDINE SYNTHASE"/>
    <property type="match status" value="1"/>
</dbReference>
<dbReference type="PANTHER" id="PTHR11558">
    <property type="entry name" value="SPERMIDINE/SPERMINE SYNTHASE"/>
    <property type="match status" value="1"/>
</dbReference>
<dbReference type="Pfam" id="PF17284">
    <property type="entry name" value="Spermine_synt_N"/>
    <property type="match status" value="1"/>
</dbReference>
<dbReference type="Pfam" id="PF01564">
    <property type="entry name" value="Spermine_synth"/>
    <property type="match status" value="1"/>
</dbReference>
<dbReference type="SUPFAM" id="SSF53335">
    <property type="entry name" value="S-adenosyl-L-methionine-dependent methyltransferases"/>
    <property type="match status" value="1"/>
</dbReference>
<dbReference type="PROSITE" id="PS01330">
    <property type="entry name" value="PABS_1"/>
    <property type="match status" value="1"/>
</dbReference>
<dbReference type="PROSITE" id="PS51006">
    <property type="entry name" value="PABS_2"/>
    <property type="match status" value="1"/>
</dbReference>
<feature type="chain" id="PRO_1000012032" description="Polyamine aminopropyltransferase">
    <location>
        <begin position="1"/>
        <end position="285"/>
    </location>
</feature>
<feature type="domain" description="PABS" evidence="1">
    <location>
        <begin position="5"/>
        <end position="241"/>
    </location>
</feature>
<feature type="active site" description="Proton acceptor" evidence="1">
    <location>
        <position position="160"/>
    </location>
</feature>
<feature type="binding site" evidence="1">
    <location>
        <position position="35"/>
    </location>
    <ligand>
        <name>S-methyl-5'-thioadenosine</name>
        <dbReference type="ChEBI" id="CHEBI:17509"/>
    </ligand>
</feature>
<feature type="binding site" evidence="1">
    <location>
        <position position="66"/>
    </location>
    <ligand>
        <name>spermidine</name>
        <dbReference type="ChEBI" id="CHEBI:57834"/>
    </ligand>
</feature>
<feature type="binding site" evidence="1">
    <location>
        <position position="90"/>
    </location>
    <ligand>
        <name>spermidine</name>
        <dbReference type="ChEBI" id="CHEBI:57834"/>
    </ligand>
</feature>
<feature type="binding site" evidence="1">
    <location>
        <position position="110"/>
    </location>
    <ligand>
        <name>S-methyl-5'-thioadenosine</name>
        <dbReference type="ChEBI" id="CHEBI:17509"/>
    </ligand>
</feature>
<feature type="binding site" evidence="1">
    <location>
        <begin position="141"/>
        <end position="142"/>
    </location>
    <ligand>
        <name>S-methyl-5'-thioadenosine</name>
        <dbReference type="ChEBI" id="CHEBI:17509"/>
    </ligand>
</feature>
<feature type="binding site" evidence="1">
    <location>
        <begin position="160"/>
        <end position="163"/>
    </location>
    <ligand>
        <name>spermidine</name>
        <dbReference type="ChEBI" id="CHEBI:57834"/>
    </ligand>
</feature>
<feature type="binding site" evidence="1">
    <location>
        <position position="167"/>
    </location>
    <ligand>
        <name>S-methyl-5'-thioadenosine</name>
        <dbReference type="ChEBI" id="CHEBI:17509"/>
    </ligand>
</feature>
<protein>
    <recommendedName>
        <fullName evidence="1">Polyamine aminopropyltransferase</fullName>
    </recommendedName>
    <alternativeName>
        <fullName evidence="1">Putrescine aminopropyltransferase</fullName>
        <shortName evidence="1">PAPT</shortName>
    </alternativeName>
    <alternativeName>
        <fullName evidence="1">Spermidine synthase</fullName>
        <shortName evidence="1">SPDS</shortName>
        <shortName evidence="1">SPDSY</shortName>
        <ecNumber evidence="1">2.5.1.16</ecNumber>
    </alternativeName>
</protein>
<reference key="1">
    <citation type="journal article" date="2005" name="Nucleic Acids Res.">
        <title>The genome sequence of Xanthomonas oryzae pathovar oryzae KACC10331, the bacterial blight pathogen of rice.</title>
        <authorList>
            <person name="Lee B.-M."/>
            <person name="Park Y.-J."/>
            <person name="Park D.-S."/>
            <person name="Kang H.-W."/>
            <person name="Kim J.-G."/>
            <person name="Song E.-S."/>
            <person name="Park I.-C."/>
            <person name="Yoon U.-H."/>
            <person name="Hahn J.-H."/>
            <person name="Koo B.-S."/>
            <person name="Lee G.-B."/>
            <person name="Kim H."/>
            <person name="Park H.-S."/>
            <person name="Yoon K.-O."/>
            <person name="Kim J.-H."/>
            <person name="Jung C.-H."/>
            <person name="Koh N.-H."/>
            <person name="Seo J.-S."/>
            <person name="Go S.-J."/>
        </authorList>
    </citation>
    <scope>NUCLEOTIDE SEQUENCE [LARGE SCALE GENOMIC DNA]</scope>
    <source>
        <strain>KACC10331 / KXO85</strain>
    </source>
</reference>
<gene>
    <name evidence="1" type="primary">speE</name>
    <name type="ordered locus">XOO0219</name>
</gene>